<keyword id="KW-0903">Direct protein sequencing</keyword>
<keyword id="KW-1015">Disulfide bond</keyword>
<keyword id="KW-0872">Ion channel impairing toxin</keyword>
<keyword id="KW-0528">Neurotoxin</keyword>
<keyword id="KW-0964">Secreted</keyword>
<keyword id="KW-0800">Toxin</keyword>
<keyword id="KW-0738">Voltage-gated sodium channel impairing toxin</keyword>
<feature type="chain" id="PRO_0000451729" description="Beta-toxin Rc1">
    <location>
        <begin position="1"/>
        <end position="49"/>
    </location>
</feature>
<feature type="disulfide bond" evidence="1">
    <location>
        <begin position="15"/>
        <end position="31"/>
    </location>
</feature>
<feature type="disulfide bond" evidence="1">
    <location>
        <begin position="22"/>
        <end position="40"/>
    </location>
</feature>
<feature type="disulfide bond" evidence="1">
    <location>
        <begin position="26"/>
        <end position="42"/>
    </location>
</feature>
<feature type="non-consecutive residues">
    <location>
        <begin position="27"/>
        <end position="28"/>
    </location>
</feature>
<accession>C0HLR6</accession>
<proteinExistence type="evidence at protein level"/>
<organism evidence="3">
    <name type="scientific">Rhopalurus crassicauda</name>
    <name type="common">Scorpion</name>
    <dbReference type="NCBI Taxonomy" id="2718978"/>
    <lineage>
        <taxon>Eukaryota</taxon>
        <taxon>Metazoa</taxon>
        <taxon>Ecdysozoa</taxon>
        <taxon>Arthropoda</taxon>
        <taxon>Chelicerata</taxon>
        <taxon>Arachnida</taxon>
        <taxon>Scorpiones</taxon>
        <taxon>Buthida</taxon>
        <taxon>Buthoidea</taxon>
        <taxon>Buthidae</taxon>
        <taxon>Rhopalurus</taxon>
    </lineage>
</organism>
<comment type="function">
    <text evidence="2">Beta toxins bind voltage-independently at site-4 of sodium channels (Nav) and shift the voltage of activation toward more negative potentials thereby affecting sodium channel activation and promoting spontaneous and repetitive firing (PubMed:32973807). This toxin acts on X.laevis Nav1.6/SCN8A and insect BgNav1 channels, and also displays a small but significant effect on X.laevis Nav1.4/SCN4A channels (PubMed:32973807). In mice induces nociception (licking and lifting behaviors) during the first 15 minutes after injection, and increases the release of TNF-alpha in J774.1 cells (PubMed:32973807).</text>
</comment>
<comment type="subcellular location">
    <subcellularLocation>
        <location evidence="2">Secreted</location>
    </subcellularLocation>
</comment>
<comment type="tissue specificity">
    <text evidence="5">Expressed by the venom gland.</text>
</comment>
<comment type="domain">
    <text evidence="4">Has the structural arrangement of an alpha-helix connected to antiparallel beta-sheets by disulfide bonds (CS-alpha/beta).</text>
</comment>
<comment type="similarity">
    <text evidence="4">Belongs to the long (4 C-C) scorpion toxin superfamily. Sodium channel inhibitor family. Beta subfamily.</text>
</comment>
<protein>
    <recommendedName>
        <fullName evidence="3">Beta-toxin Rc1</fullName>
    </recommendedName>
</protein>
<reference evidence="4" key="1">
    <citation type="journal article" date="2020" name="Front. Immunol.">
        <title>Pioneering Study on Rhopalurus crassicauda Scorpion Venom: Isolation and Characterization of the Major Toxin and Hyaluronidase.</title>
        <authorList>
            <person name="Abreu C.B."/>
            <person name="Bordon K.F."/>
            <person name="Cerni F.A."/>
            <person name="Oliveira I.S."/>
            <person name="Balenzuela C."/>
            <person name="Alexandre-Silva G.M."/>
            <person name="Zoccal K.F."/>
            <person name="Reis M.B."/>
            <person name="Wiezel G.A."/>
            <person name="Peigneur S."/>
            <person name="Pinheiro-Junior E.L."/>
            <person name="Tytgat J."/>
            <person name="Cunha T.M."/>
            <person name="Quinton L."/>
            <person name="Faccioli L.H."/>
            <person name="Arantes E.C."/>
            <person name="Zottich U."/>
            <person name="Pucca M.B."/>
        </authorList>
    </citation>
    <scope>PROTEIN SEQUENCE</scope>
    <scope>FUNCTION</scope>
    <scope>SUBCELLULAR LOCATION</scope>
    <scope>TISSUE SPECIFICITY</scope>
    <scope>IDENTIFICATION BY MASS SPECTROMETRY</scope>
    <source>
        <tissue evidence="3">Venom</tissue>
    </source>
</reference>
<name>SCX1_RHOCR</name>
<dbReference type="SMR" id="C0HLR6"/>
<dbReference type="GO" id="GO:0005615">
    <property type="term" value="C:extracellular space"/>
    <property type="evidence" value="ECO:0000314"/>
    <property type="project" value="UniProtKB"/>
</dbReference>
<dbReference type="GO" id="GO:0019871">
    <property type="term" value="F:sodium channel inhibitor activity"/>
    <property type="evidence" value="ECO:0000314"/>
    <property type="project" value="UniProtKB"/>
</dbReference>
<dbReference type="GO" id="GO:0090729">
    <property type="term" value="F:toxin activity"/>
    <property type="evidence" value="ECO:0000314"/>
    <property type="project" value="UniProtKB"/>
</dbReference>
<dbReference type="GO" id="GO:0006952">
    <property type="term" value="P:defense response"/>
    <property type="evidence" value="ECO:0007669"/>
    <property type="project" value="InterPro"/>
</dbReference>
<dbReference type="GO" id="GO:0044493">
    <property type="term" value="P:envenomation resulting in negative regulation of voltage-gated sodium channel activity in another organism"/>
    <property type="evidence" value="ECO:0000314"/>
    <property type="project" value="UniProtKB"/>
</dbReference>
<dbReference type="CDD" id="cd23106">
    <property type="entry name" value="neurotoxins_LC_scorpion"/>
    <property type="match status" value="1"/>
</dbReference>
<dbReference type="Gene3D" id="3.30.30.10">
    <property type="entry name" value="Knottin, scorpion toxin-like"/>
    <property type="match status" value="1"/>
</dbReference>
<dbReference type="InterPro" id="IPR044062">
    <property type="entry name" value="LCN-type_CS_alpha_beta_dom"/>
</dbReference>
<dbReference type="InterPro" id="IPR003614">
    <property type="entry name" value="Scorpion_toxin-like"/>
</dbReference>
<dbReference type="InterPro" id="IPR036574">
    <property type="entry name" value="Scorpion_toxin-like_sf"/>
</dbReference>
<dbReference type="InterPro" id="IPR018218">
    <property type="entry name" value="Scorpion_toxinL"/>
</dbReference>
<dbReference type="InterPro" id="IPR002061">
    <property type="entry name" value="Scorpion_toxinL/defensin"/>
</dbReference>
<dbReference type="Pfam" id="PF00537">
    <property type="entry name" value="Toxin_3"/>
    <property type="match status" value="1"/>
</dbReference>
<dbReference type="PRINTS" id="PR00285">
    <property type="entry name" value="SCORPNTOXIN"/>
</dbReference>
<dbReference type="SMART" id="SM00505">
    <property type="entry name" value="Knot1"/>
    <property type="match status" value="1"/>
</dbReference>
<dbReference type="SUPFAM" id="SSF57095">
    <property type="entry name" value="Scorpion toxin-like"/>
    <property type="match status" value="1"/>
</dbReference>
<dbReference type="PROSITE" id="PS51863">
    <property type="entry name" value="LCN_CSAB"/>
    <property type="match status" value="1"/>
</dbReference>
<evidence type="ECO:0000255" key="1">
    <source>
        <dbReference type="PROSITE-ProRule" id="PRU01210"/>
    </source>
</evidence>
<evidence type="ECO:0000269" key="2">
    <source>
    </source>
</evidence>
<evidence type="ECO:0000303" key="3">
    <source>
    </source>
</evidence>
<evidence type="ECO:0000305" key="4"/>
<evidence type="ECO:0000305" key="5">
    <source>
    </source>
</evidence>
<sequence length="49" mass="5500">KGGYPVDSKGCKISCVINNEYCSRDCTSGYCYFLRWGLACWCDGVPPQR</sequence>